<gene>
    <name type="primary">yusV</name>
    <name type="ordered locus">BSU32940</name>
</gene>
<keyword id="KW-0067">ATP-binding</keyword>
<keyword id="KW-1003">Cell membrane</keyword>
<keyword id="KW-0406">Ion transport</keyword>
<keyword id="KW-0408">Iron</keyword>
<keyword id="KW-0410">Iron transport</keyword>
<keyword id="KW-0472">Membrane</keyword>
<keyword id="KW-0547">Nucleotide-binding</keyword>
<keyword id="KW-1185">Reference proteome</keyword>
<keyword id="KW-0813">Transport</keyword>
<reference key="1">
    <citation type="journal article" date="1997" name="Nature">
        <title>The complete genome sequence of the Gram-positive bacterium Bacillus subtilis.</title>
        <authorList>
            <person name="Kunst F."/>
            <person name="Ogasawara N."/>
            <person name="Moszer I."/>
            <person name="Albertini A.M."/>
            <person name="Alloni G."/>
            <person name="Azevedo V."/>
            <person name="Bertero M.G."/>
            <person name="Bessieres P."/>
            <person name="Bolotin A."/>
            <person name="Borchert S."/>
            <person name="Borriss R."/>
            <person name="Boursier L."/>
            <person name="Brans A."/>
            <person name="Braun M."/>
            <person name="Brignell S.C."/>
            <person name="Bron S."/>
            <person name="Brouillet S."/>
            <person name="Bruschi C.V."/>
            <person name="Caldwell B."/>
            <person name="Capuano V."/>
            <person name="Carter N.M."/>
            <person name="Choi S.-K."/>
            <person name="Codani J.-J."/>
            <person name="Connerton I.F."/>
            <person name="Cummings N.J."/>
            <person name="Daniel R.A."/>
            <person name="Denizot F."/>
            <person name="Devine K.M."/>
            <person name="Duesterhoeft A."/>
            <person name="Ehrlich S.D."/>
            <person name="Emmerson P.T."/>
            <person name="Entian K.-D."/>
            <person name="Errington J."/>
            <person name="Fabret C."/>
            <person name="Ferrari E."/>
            <person name="Foulger D."/>
            <person name="Fritz C."/>
            <person name="Fujita M."/>
            <person name="Fujita Y."/>
            <person name="Fuma S."/>
            <person name="Galizzi A."/>
            <person name="Galleron N."/>
            <person name="Ghim S.-Y."/>
            <person name="Glaser P."/>
            <person name="Goffeau A."/>
            <person name="Golightly E.J."/>
            <person name="Grandi G."/>
            <person name="Guiseppi G."/>
            <person name="Guy B.J."/>
            <person name="Haga K."/>
            <person name="Haiech J."/>
            <person name="Harwood C.R."/>
            <person name="Henaut A."/>
            <person name="Hilbert H."/>
            <person name="Holsappel S."/>
            <person name="Hosono S."/>
            <person name="Hullo M.-F."/>
            <person name="Itaya M."/>
            <person name="Jones L.-M."/>
            <person name="Joris B."/>
            <person name="Karamata D."/>
            <person name="Kasahara Y."/>
            <person name="Klaerr-Blanchard M."/>
            <person name="Klein C."/>
            <person name="Kobayashi Y."/>
            <person name="Koetter P."/>
            <person name="Koningstein G."/>
            <person name="Krogh S."/>
            <person name="Kumano M."/>
            <person name="Kurita K."/>
            <person name="Lapidus A."/>
            <person name="Lardinois S."/>
            <person name="Lauber J."/>
            <person name="Lazarevic V."/>
            <person name="Lee S.-M."/>
            <person name="Levine A."/>
            <person name="Liu H."/>
            <person name="Masuda S."/>
            <person name="Mauel C."/>
            <person name="Medigue C."/>
            <person name="Medina N."/>
            <person name="Mellado R.P."/>
            <person name="Mizuno M."/>
            <person name="Moestl D."/>
            <person name="Nakai S."/>
            <person name="Noback M."/>
            <person name="Noone D."/>
            <person name="O'Reilly M."/>
            <person name="Ogawa K."/>
            <person name="Ogiwara A."/>
            <person name="Oudega B."/>
            <person name="Park S.-H."/>
            <person name="Parro V."/>
            <person name="Pohl T.M."/>
            <person name="Portetelle D."/>
            <person name="Porwollik S."/>
            <person name="Prescott A.M."/>
            <person name="Presecan E."/>
            <person name="Pujic P."/>
            <person name="Purnelle B."/>
            <person name="Rapoport G."/>
            <person name="Rey M."/>
            <person name="Reynolds S."/>
            <person name="Rieger M."/>
            <person name="Rivolta C."/>
            <person name="Rocha E."/>
            <person name="Roche B."/>
            <person name="Rose M."/>
            <person name="Sadaie Y."/>
            <person name="Sato T."/>
            <person name="Scanlan E."/>
            <person name="Schleich S."/>
            <person name="Schroeter R."/>
            <person name="Scoffone F."/>
            <person name="Sekiguchi J."/>
            <person name="Sekowska A."/>
            <person name="Seror S.J."/>
            <person name="Serror P."/>
            <person name="Shin B.-S."/>
            <person name="Soldo B."/>
            <person name="Sorokin A."/>
            <person name="Tacconi E."/>
            <person name="Takagi T."/>
            <person name="Takahashi H."/>
            <person name="Takemaru K."/>
            <person name="Takeuchi M."/>
            <person name="Tamakoshi A."/>
            <person name="Tanaka T."/>
            <person name="Terpstra P."/>
            <person name="Tognoni A."/>
            <person name="Tosato V."/>
            <person name="Uchiyama S."/>
            <person name="Vandenbol M."/>
            <person name="Vannier F."/>
            <person name="Vassarotti A."/>
            <person name="Viari A."/>
            <person name="Wambutt R."/>
            <person name="Wedler E."/>
            <person name="Wedler H."/>
            <person name="Weitzenegger T."/>
            <person name="Winters P."/>
            <person name="Wipat A."/>
            <person name="Yamamoto H."/>
            <person name="Yamane K."/>
            <person name="Yasumoto K."/>
            <person name="Yata K."/>
            <person name="Yoshida K."/>
            <person name="Yoshikawa H.-F."/>
            <person name="Zumstein E."/>
            <person name="Yoshikawa H."/>
            <person name="Danchin A."/>
        </authorList>
    </citation>
    <scope>NUCLEOTIDE SEQUENCE [LARGE SCALE GENOMIC DNA]</scope>
    <source>
        <strain>168</strain>
    </source>
</reference>
<reference key="2">
    <citation type="journal article" date="2002" name="Mol. Microbiol.">
        <title>Global analysis of the Bacillus subtilis Fur regulon and the iron starvation stimulon.</title>
        <authorList>
            <person name="Baichoo N."/>
            <person name="Wang T."/>
            <person name="Ye R."/>
            <person name="Helmann J.D."/>
        </authorList>
    </citation>
    <scope>INDUCTION</scope>
    <source>
        <strain>168</strain>
    </source>
</reference>
<reference key="3">
    <citation type="journal article" date="2006" name="J. Bacteriol.">
        <title>Role of the Fur regulon in iron transport in Bacillus subtilis.</title>
        <authorList>
            <person name="Ollinger J."/>
            <person name="Song K.-B."/>
            <person name="Antelmann H."/>
            <person name="Hecker M."/>
            <person name="Helmann J.D."/>
        </authorList>
    </citation>
    <scope>FUNCTION</scope>
    <scope>POSSIBLE SUBUNIT</scope>
    <scope>DISRUPTION PHENOTYPE</scope>
    <scope>INDUCTION</scope>
    <source>
        <strain>168</strain>
    </source>
</reference>
<comment type="function">
    <text evidence="1 4 5">Provides the ATPase subunit for at least 2 ABC transporter complexes; YfiYZ/YfhA/YusV involved in import of the iron-hydroxamate siderophores schizokinen, arthrobactin and corprogen (Probable), and FeuABC/YusV involved in import of the catecholate siderophores bacillibactin and enterobactin (Probable). Probably responsible for energy coupling to the transport system (By similarity).</text>
</comment>
<comment type="subunit">
    <text evidence="5">The iron-hydroxamate siderophore complex is composed of one ATP-binding protein (YusV), two transmembrane proteins (YfiZ and YfhA) and a solute-binding protein (YfiY); the catechoplate siderophore complex is composed of one ATP-binding protein (YusV), two transmembrane proteins (FeuB and FeuC) and a solute-binding protein (FeuA).</text>
</comment>
<comment type="subcellular location">
    <subcellularLocation>
        <location evidence="5">Cell membrane</location>
        <topology evidence="5">Peripheral membrane protein</topology>
    </subcellularLocation>
</comment>
<comment type="induction">
    <text evidence="3 4">Induced by iron starvation, partially repressed by fur.</text>
</comment>
<comment type="disruption phenotype">
    <text evidence="4">Strains lacking this gene show a reduction in growth stimulation by the iron-hydroxamate siderophores schizokinen and arthrobactin compared to wild-type. They also show a reduction in growth stimulation by the catecholate siderophores enterobactin and bacillibactin.</text>
</comment>
<comment type="similarity">
    <text evidence="5">Belongs to the ABC transporter superfamily.</text>
</comment>
<organism>
    <name type="scientific">Bacillus subtilis (strain 168)</name>
    <dbReference type="NCBI Taxonomy" id="224308"/>
    <lineage>
        <taxon>Bacteria</taxon>
        <taxon>Bacillati</taxon>
        <taxon>Bacillota</taxon>
        <taxon>Bacilli</taxon>
        <taxon>Bacillales</taxon>
        <taxon>Bacillaceae</taxon>
        <taxon>Bacillus</taxon>
    </lineage>
</organism>
<dbReference type="EMBL" id="AL009126">
    <property type="protein sequence ID" value="CAB15283.1"/>
    <property type="molecule type" value="Genomic_DNA"/>
</dbReference>
<dbReference type="PIR" id="G70022">
    <property type="entry name" value="G70022"/>
</dbReference>
<dbReference type="RefSeq" id="WP_010886609.1">
    <property type="nucleotide sequence ID" value="NZ_OZ025638.1"/>
</dbReference>
<dbReference type="SMR" id="O32188"/>
<dbReference type="FunCoup" id="O32188">
    <property type="interactions" value="209"/>
</dbReference>
<dbReference type="STRING" id="224308.BSU32940"/>
<dbReference type="PaxDb" id="224308-BSU32940"/>
<dbReference type="EnsemblBacteria" id="CAB15283">
    <property type="protein sequence ID" value="CAB15283"/>
    <property type="gene ID" value="BSU_32940"/>
</dbReference>
<dbReference type="GeneID" id="935921"/>
<dbReference type="KEGG" id="bsu:BSU32940"/>
<dbReference type="PATRIC" id="fig|224308.43.peg.3449"/>
<dbReference type="eggNOG" id="COG1120">
    <property type="taxonomic scope" value="Bacteria"/>
</dbReference>
<dbReference type="InParanoid" id="O32188"/>
<dbReference type="OrthoDB" id="9787851at2"/>
<dbReference type="PhylomeDB" id="O32188"/>
<dbReference type="BioCyc" id="BSUB:BSU32940-MONOMER"/>
<dbReference type="Proteomes" id="UP000001570">
    <property type="component" value="Chromosome"/>
</dbReference>
<dbReference type="GO" id="GO:0005886">
    <property type="term" value="C:plasma membrane"/>
    <property type="evidence" value="ECO:0007669"/>
    <property type="project" value="UniProtKB-SubCell"/>
</dbReference>
<dbReference type="GO" id="GO:0005524">
    <property type="term" value="F:ATP binding"/>
    <property type="evidence" value="ECO:0007669"/>
    <property type="project" value="UniProtKB-KW"/>
</dbReference>
<dbReference type="GO" id="GO:0016887">
    <property type="term" value="F:ATP hydrolysis activity"/>
    <property type="evidence" value="ECO:0007669"/>
    <property type="project" value="InterPro"/>
</dbReference>
<dbReference type="GO" id="GO:0006826">
    <property type="term" value="P:iron ion transport"/>
    <property type="evidence" value="ECO:0007669"/>
    <property type="project" value="UniProtKB-KW"/>
</dbReference>
<dbReference type="CDD" id="cd03214">
    <property type="entry name" value="ABC_Iron-Siderophores_B12_Hemin"/>
    <property type="match status" value="1"/>
</dbReference>
<dbReference type="FunFam" id="3.40.50.300:FF:000134">
    <property type="entry name" value="Iron-enterobactin ABC transporter ATP-binding protein"/>
    <property type="match status" value="1"/>
</dbReference>
<dbReference type="Gene3D" id="3.40.50.300">
    <property type="entry name" value="P-loop containing nucleotide triphosphate hydrolases"/>
    <property type="match status" value="1"/>
</dbReference>
<dbReference type="InterPro" id="IPR003593">
    <property type="entry name" value="AAA+_ATPase"/>
</dbReference>
<dbReference type="InterPro" id="IPR003439">
    <property type="entry name" value="ABC_transporter-like_ATP-bd"/>
</dbReference>
<dbReference type="InterPro" id="IPR017871">
    <property type="entry name" value="ABC_transporter-like_CS"/>
</dbReference>
<dbReference type="InterPro" id="IPR027417">
    <property type="entry name" value="P-loop_NTPase"/>
</dbReference>
<dbReference type="InterPro" id="IPR051535">
    <property type="entry name" value="Siderophore_ABC-ATPase"/>
</dbReference>
<dbReference type="PANTHER" id="PTHR42771">
    <property type="entry name" value="IRON(3+)-HYDROXAMATE IMPORT ATP-BINDING PROTEIN FHUC"/>
    <property type="match status" value="1"/>
</dbReference>
<dbReference type="PANTHER" id="PTHR42771:SF2">
    <property type="entry name" value="IRON(3+)-HYDROXAMATE IMPORT ATP-BINDING PROTEIN FHUC"/>
    <property type="match status" value="1"/>
</dbReference>
<dbReference type="Pfam" id="PF00005">
    <property type="entry name" value="ABC_tran"/>
    <property type="match status" value="1"/>
</dbReference>
<dbReference type="SMART" id="SM00382">
    <property type="entry name" value="AAA"/>
    <property type="match status" value="1"/>
</dbReference>
<dbReference type="SUPFAM" id="SSF52540">
    <property type="entry name" value="P-loop containing nucleoside triphosphate hydrolases"/>
    <property type="match status" value="1"/>
</dbReference>
<dbReference type="PROSITE" id="PS00211">
    <property type="entry name" value="ABC_TRANSPORTER_1"/>
    <property type="match status" value="1"/>
</dbReference>
<dbReference type="PROSITE" id="PS50893">
    <property type="entry name" value="ABC_TRANSPORTER_2"/>
    <property type="match status" value="1"/>
</dbReference>
<sequence length="275" mass="30494">MGMSAISTETLSLGYGDAVIIDELNLTIPKGEITVFIGSNGCGKSTLLRSLARLMKPRGGSVLLEGRAIAKLPTKEVAKELAILPQGPSAPEGLTVHQLVKQGRYPYQNWLKQWSKEDEEAVERALKATKLEDMADRAVDSLSGGQRQRAWIAMTLAQETDIILLDEPTTYLDMTHQIEILDLLFELNEKEDRTIVMVLHDLNLACRYAHHLVAIKDKRIYAEGRPEEVITCDLVQNVFSMNCQVTQDPLFGTPLCIPHGRGRCIVQEAAFTSHG</sequence>
<evidence type="ECO:0000250" key="1"/>
<evidence type="ECO:0000255" key="2">
    <source>
        <dbReference type="PROSITE-ProRule" id="PRU00434"/>
    </source>
</evidence>
<evidence type="ECO:0000269" key="3">
    <source>
    </source>
</evidence>
<evidence type="ECO:0000269" key="4">
    <source>
    </source>
</evidence>
<evidence type="ECO:0000305" key="5"/>
<proteinExistence type="evidence at protein level"/>
<feature type="chain" id="PRO_0000363831" description="Probable siderophore transport system ATP-binding protein YusV">
    <location>
        <begin position="1"/>
        <end position="275"/>
    </location>
</feature>
<feature type="domain" description="ABC transporter" evidence="2">
    <location>
        <begin position="6"/>
        <end position="242"/>
    </location>
</feature>
<feature type="binding site" evidence="2">
    <location>
        <begin position="38"/>
        <end position="45"/>
    </location>
    <ligand>
        <name>ATP</name>
        <dbReference type="ChEBI" id="CHEBI:30616"/>
    </ligand>
</feature>
<protein>
    <recommendedName>
        <fullName>Probable siderophore transport system ATP-binding protein YusV</fullName>
    </recommendedName>
</protein>
<name>YUSV_BACSU</name>
<accession>O32188</accession>